<gene>
    <name evidence="1" type="primary">hslU</name>
    <name type="ordered locus">STM4091</name>
</gene>
<comment type="function">
    <text evidence="1">ATPase subunit of a proteasome-like degradation complex; this subunit has chaperone activity. The binding of ATP and its subsequent hydrolysis by HslU are essential for unfolding of protein substrates subsequently hydrolyzed by HslV. HslU recognizes the N-terminal part of its protein substrates and unfolds these before they are guided to HslV for hydrolysis.</text>
</comment>
<comment type="subunit">
    <text evidence="1">A double ring-shaped homohexamer of HslV is capped on each side by a ring-shaped HslU homohexamer. The assembly of the HslU/HslV complex is dependent on binding of ATP.</text>
</comment>
<comment type="subcellular location">
    <subcellularLocation>
        <location evidence="1">Cytoplasm</location>
    </subcellularLocation>
</comment>
<comment type="induction">
    <text evidence="1">By heat shock.</text>
</comment>
<comment type="similarity">
    <text evidence="1">Belongs to the ClpX chaperone family. HslU subfamily.</text>
</comment>
<dbReference type="EMBL" id="AJ295710">
    <property type="protein sequence ID" value="CAC00720.1"/>
    <property type="molecule type" value="Genomic_DNA"/>
</dbReference>
<dbReference type="EMBL" id="AE006468">
    <property type="protein sequence ID" value="AAL22931.1"/>
    <property type="molecule type" value="Genomic_DNA"/>
</dbReference>
<dbReference type="EMBL" id="AF020812">
    <property type="protein sequence ID" value="AAB80745.1"/>
    <property type="molecule type" value="Genomic_DNA"/>
</dbReference>
<dbReference type="RefSeq" id="NP_462972.1">
    <property type="nucleotide sequence ID" value="NC_003197.2"/>
</dbReference>
<dbReference type="RefSeq" id="WP_001293360.1">
    <property type="nucleotide sequence ID" value="NC_003197.2"/>
</dbReference>
<dbReference type="SMR" id="O30911"/>
<dbReference type="STRING" id="99287.STM4091"/>
<dbReference type="PaxDb" id="99287-STM4091"/>
<dbReference type="GeneID" id="1255618"/>
<dbReference type="KEGG" id="stm:STM4091"/>
<dbReference type="PATRIC" id="fig|99287.12.peg.4312"/>
<dbReference type="HOGENOM" id="CLU_033123_0_0_6"/>
<dbReference type="OMA" id="YGMIKTD"/>
<dbReference type="PhylomeDB" id="O30911"/>
<dbReference type="BioCyc" id="SENT99287:STM4091-MONOMER"/>
<dbReference type="Proteomes" id="UP000001014">
    <property type="component" value="Chromosome"/>
</dbReference>
<dbReference type="GO" id="GO:0009376">
    <property type="term" value="C:HslUV protease complex"/>
    <property type="evidence" value="ECO:0000318"/>
    <property type="project" value="GO_Central"/>
</dbReference>
<dbReference type="GO" id="GO:0005524">
    <property type="term" value="F:ATP binding"/>
    <property type="evidence" value="ECO:0000318"/>
    <property type="project" value="GO_Central"/>
</dbReference>
<dbReference type="GO" id="GO:0016887">
    <property type="term" value="F:ATP hydrolysis activity"/>
    <property type="evidence" value="ECO:0000318"/>
    <property type="project" value="GO_Central"/>
</dbReference>
<dbReference type="GO" id="GO:0008233">
    <property type="term" value="F:peptidase activity"/>
    <property type="evidence" value="ECO:0007669"/>
    <property type="project" value="InterPro"/>
</dbReference>
<dbReference type="GO" id="GO:0036402">
    <property type="term" value="F:proteasome-activating activity"/>
    <property type="evidence" value="ECO:0007669"/>
    <property type="project" value="UniProtKB-UniRule"/>
</dbReference>
<dbReference type="GO" id="GO:0043335">
    <property type="term" value="P:protein unfolding"/>
    <property type="evidence" value="ECO:0007669"/>
    <property type="project" value="UniProtKB-UniRule"/>
</dbReference>
<dbReference type="GO" id="GO:0051603">
    <property type="term" value="P:proteolysis involved in protein catabolic process"/>
    <property type="evidence" value="ECO:0000318"/>
    <property type="project" value="GO_Central"/>
</dbReference>
<dbReference type="CDD" id="cd19498">
    <property type="entry name" value="RecA-like_HslU"/>
    <property type="match status" value="1"/>
</dbReference>
<dbReference type="FunFam" id="1.10.8.10:FF:000012">
    <property type="entry name" value="ATP-dependent protease ATPase subunit HslU"/>
    <property type="match status" value="1"/>
</dbReference>
<dbReference type="FunFam" id="1.10.8.10:FF:000028">
    <property type="entry name" value="ATP-dependent protease ATPase subunit HslU"/>
    <property type="match status" value="1"/>
</dbReference>
<dbReference type="FunFam" id="1.10.8.60:FF:000027">
    <property type="entry name" value="ATP-dependent protease ATPase subunit HslU"/>
    <property type="match status" value="1"/>
</dbReference>
<dbReference type="FunFam" id="3.40.50.300:FF:000213">
    <property type="entry name" value="ATP-dependent protease ATPase subunit HslU"/>
    <property type="match status" value="1"/>
</dbReference>
<dbReference type="FunFam" id="3.40.50.300:FF:000220">
    <property type="entry name" value="ATP-dependent protease ATPase subunit HslU"/>
    <property type="match status" value="1"/>
</dbReference>
<dbReference type="Gene3D" id="1.10.8.60">
    <property type="match status" value="1"/>
</dbReference>
<dbReference type="Gene3D" id="1.10.8.10">
    <property type="entry name" value="DNA helicase RuvA subunit, C-terminal domain"/>
    <property type="match status" value="2"/>
</dbReference>
<dbReference type="Gene3D" id="3.40.50.300">
    <property type="entry name" value="P-loop containing nucleotide triphosphate hydrolases"/>
    <property type="match status" value="1"/>
</dbReference>
<dbReference type="HAMAP" id="MF_00249">
    <property type="entry name" value="HslU"/>
    <property type="match status" value="1"/>
</dbReference>
<dbReference type="InterPro" id="IPR003593">
    <property type="entry name" value="AAA+_ATPase"/>
</dbReference>
<dbReference type="InterPro" id="IPR050052">
    <property type="entry name" value="ATP-dep_Clp_protease_ClpX"/>
</dbReference>
<dbReference type="InterPro" id="IPR003959">
    <property type="entry name" value="ATPase_AAA_core"/>
</dbReference>
<dbReference type="InterPro" id="IPR019489">
    <property type="entry name" value="Clp_ATPase_C"/>
</dbReference>
<dbReference type="InterPro" id="IPR004491">
    <property type="entry name" value="HslU"/>
</dbReference>
<dbReference type="InterPro" id="IPR027417">
    <property type="entry name" value="P-loop_NTPase"/>
</dbReference>
<dbReference type="NCBIfam" id="TIGR00390">
    <property type="entry name" value="hslU"/>
    <property type="match status" value="1"/>
</dbReference>
<dbReference type="NCBIfam" id="NF003544">
    <property type="entry name" value="PRK05201.1"/>
    <property type="match status" value="1"/>
</dbReference>
<dbReference type="PANTHER" id="PTHR48102">
    <property type="entry name" value="ATP-DEPENDENT CLP PROTEASE ATP-BINDING SUBUNIT CLPX-LIKE, MITOCHONDRIAL-RELATED"/>
    <property type="match status" value="1"/>
</dbReference>
<dbReference type="PANTHER" id="PTHR48102:SF3">
    <property type="entry name" value="ATP-DEPENDENT PROTEASE ATPASE SUBUNIT HSLU"/>
    <property type="match status" value="1"/>
</dbReference>
<dbReference type="Pfam" id="PF00004">
    <property type="entry name" value="AAA"/>
    <property type="match status" value="1"/>
</dbReference>
<dbReference type="Pfam" id="PF07724">
    <property type="entry name" value="AAA_2"/>
    <property type="match status" value="1"/>
</dbReference>
<dbReference type="SMART" id="SM00382">
    <property type="entry name" value="AAA"/>
    <property type="match status" value="1"/>
</dbReference>
<dbReference type="SMART" id="SM01086">
    <property type="entry name" value="ClpB_D2-small"/>
    <property type="match status" value="1"/>
</dbReference>
<dbReference type="SUPFAM" id="SSF52540">
    <property type="entry name" value="P-loop containing nucleoside triphosphate hydrolases"/>
    <property type="match status" value="1"/>
</dbReference>
<sequence length="443" mass="49668">MSEMTPREIVSELNKHIIGQDNAKRSVAIALRNRWRRMQLDEELRHEVTPKNILMIGPTGVGKTEIARRLAKLANAPFIKVEATKFTEVGYVGKEVDSIIRDLTDAAVKMVRVQAIEKNRYRAEELAEERILDVLIPPAKNNWGQAEQQQEPSAARQTFRKKLREGQLDDKEIEINLAAAPMGVEIMAPPGMEEMTSQLQSMFQNLGGQKQKPRKLKIKDAMKLLVEEEAAKLVNPEELKQDAIDAVEQHGIVFIDEIDKICKRGETSGPDVSREGVQRDLLPLVEGCTVSTKHGMVKTDHILFIASGAFQVAKPSDLIPELQGRLPIRVELQALTTSDFERILTEPNASVTVQYKALMATEGVNIEFTDSGIKRIAEAAWQVNETTENIGARRLHTVLERLMEEISYNASDLHGQNITIDAEYVSKHLDALVADEDLSRFIL</sequence>
<accession>O30911</accession>
<accession>Q9K4Q5</accession>
<protein>
    <recommendedName>
        <fullName evidence="1">ATP-dependent protease ATPase subunit HslU</fullName>
    </recommendedName>
    <alternativeName>
        <fullName evidence="1">Heat shock protein HslU</fullName>
    </alternativeName>
    <alternativeName>
        <fullName evidence="1">Unfoldase HslU</fullName>
    </alternativeName>
</protein>
<proteinExistence type="inferred from homology"/>
<name>HSLU_SALTY</name>
<feature type="chain" id="PRO_0000160543" description="ATP-dependent protease ATPase subunit HslU">
    <location>
        <begin position="1"/>
        <end position="443"/>
    </location>
</feature>
<feature type="binding site" evidence="1">
    <location>
        <position position="18"/>
    </location>
    <ligand>
        <name>ATP</name>
        <dbReference type="ChEBI" id="CHEBI:30616"/>
    </ligand>
</feature>
<feature type="binding site" evidence="1">
    <location>
        <begin position="60"/>
        <end position="65"/>
    </location>
    <ligand>
        <name>ATP</name>
        <dbReference type="ChEBI" id="CHEBI:30616"/>
    </ligand>
</feature>
<feature type="binding site" evidence="1">
    <location>
        <position position="256"/>
    </location>
    <ligand>
        <name>ATP</name>
        <dbReference type="ChEBI" id="CHEBI:30616"/>
    </ligand>
</feature>
<feature type="binding site" evidence="1">
    <location>
        <position position="321"/>
    </location>
    <ligand>
        <name>ATP</name>
        <dbReference type="ChEBI" id="CHEBI:30616"/>
    </ligand>
</feature>
<feature type="binding site" evidence="1">
    <location>
        <position position="393"/>
    </location>
    <ligand>
        <name>ATP</name>
        <dbReference type="ChEBI" id="CHEBI:30616"/>
    </ligand>
</feature>
<feature type="sequence conflict" description="In Ref. 3; AAB80745." evidence="2" ref="3">
    <original>E</original>
    <variation>K</variation>
    <location>
        <position position="185"/>
    </location>
</feature>
<feature type="sequence conflict" description="In Ref. 3; AAB80745." evidence="2" ref="3">
    <original>A</original>
    <variation>P</variation>
    <location>
        <position position="230"/>
    </location>
</feature>
<feature type="sequence conflict" description="In Ref. 3; AAB80745." evidence="2" ref="3">
    <original>K</original>
    <variation>N</variation>
    <location>
        <position position="298"/>
    </location>
</feature>
<organism>
    <name type="scientific">Salmonella typhimurium (strain LT2 / SGSC1412 / ATCC 700720)</name>
    <dbReference type="NCBI Taxonomy" id="99287"/>
    <lineage>
        <taxon>Bacteria</taxon>
        <taxon>Pseudomonadati</taxon>
        <taxon>Pseudomonadota</taxon>
        <taxon>Gammaproteobacteria</taxon>
        <taxon>Enterobacterales</taxon>
        <taxon>Enterobacteriaceae</taxon>
        <taxon>Salmonella</taxon>
    </lineage>
</organism>
<evidence type="ECO:0000255" key="1">
    <source>
        <dbReference type="HAMAP-Rule" id="MF_00249"/>
    </source>
</evidence>
<evidence type="ECO:0000305" key="2"/>
<reference key="1">
    <citation type="thesis" date="2000" institute="National Taiwan University" country="Taiwan">
        <authorList>
            <person name="Chiang Y.L."/>
        </authorList>
    </citation>
    <scope>NUCLEOTIDE SEQUENCE [GENOMIC DNA]</scope>
</reference>
<reference key="2">
    <citation type="journal article" date="2001" name="Nature">
        <title>Complete genome sequence of Salmonella enterica serovar Typhimurium LT2.</title>
        <authorList>
            <person name="McClelland M."/>
            <person name="Sanderson K.E."/>
            <person name="Spieth J."/>
            <person name="Clifton S.W."/>
            <person name="Latreille P."/>
            <person name="Courtney L."/>
            <person name="Porwollik S."/>
            <person name="Ali J."/>
            <person name="Dante M."/>
            <person name="Du F."/>
            <person name="Hou S."/>
            <person name="Layman D."/>
            <person name="Leonard S."/>
            <person name="Nguyen C."/>
            <person name="Scott K."/>
            <person name="Holmes A."/>
            <person name="Grewal N."/>
            <person name="Mulvaney E."/>
            <person name="Ryan E."/>
            <person name="Sun H."/>
            <person name="Florea L."/>
            <person name="Miller W."/>
            <person name="Stoneking T."/>
            <person name="Nhan M."/>
            <person name="Waterston R."/>
            <person name="Wilson R.K."/>
        </authorList>
    </citation>
    <scope>NUCLEOTIDE SEQUENCE [LARGE SCALE GENOMIC DNA]</scope>
    <source>
        <strain>LT2 / SGSC1412 / ATCC 700720</strain>
    </source>
</reference>
<reference key="3">
    <citation type="journal article" date="1997" name="Science">
        <title>Fluorescence-based isolation of bacterial genes expressed within host cells.</title>
        <authorList>
            <person name="Valdivia R.H."/>
            <person name="Falkow S."/>
        </authorList>
    </citation>
    <scope>NUCLEOTIDE SEQUENCE [GENOMIC DNA] OF 173-300</scope>
</reference>
<keyword id="KW-0067">ATP-binding</keyword>
<keyword id="KW-0143">Chaperone</keyword>
<keyword id="KW-0963">Cytoplasm</keyword>
<keyword id="KW-0547">Nucleotide-binding</keyword>
<keyword id="KW-1185">Reference proteome</keyword>
<keyword id="KW-0346">Stress response</keyword>